<name>UBIG_YERPP</name>
<sequence length="242" mass="27466">MRAKTTSRHHNVDEQEIAKFEAVASRWWDLEGEFKPLHRINPLRLNYILQRSGGIFEKKVLDVGCGGGILAESMAREGAQVTGLDMGYEPLQVARLHALETGVKLEYVQETVENHAQQHPQHYDVVTCMEMLEHVPDPASVVRACAQLVKPGGHVFFSTINRNTKSWLMAVVGAEYLLKMVPKGTHDAKKFIRPSELIGWVDQTPLLERHIIGLHYNPITDHFKLGRNVDVNYMVHTQRDSE</sequence>
<gene>
    <name evidence="1" type="primary">ubiG</name>
    <name type="ordered locus">YPDSF_2478</name>
</gene>
<reference key="1">
    <citation type="submission" date="2007-02" db="EMBL/GenBank/DDBJ databases">
        <title>Complete sequence of chromosome of Yersinia pestis Pestoides F.</title>
        <authorList>
            <consortium name="US DOE Joint Genome Institute"/>
            <person name="Copeland A."/>
            <person name="Lucas S."/>
            <person name="Lapidus A."/>
            <person name="Barry K."/>
            <person name="Detter J.C."/>
            <person name="Glavina del Rio T."/>
            <person name="Hammon N."/>
            <person name="Israni S."/>
            <person name="Dalin E."/>
            <person name="Tice H."/>
            <person name="Pitluck S."/>
            <person name="Di Bartolo G."/>
            <person name="Chain P."/>
            <person name="Malfatti S."/>
            <person name="Shin M."/>
            <person name="Vergez L."/>
            <person name="Schmutz J."/>
            <person name="Larimer F."/>
            <person name="Land M."/>
            <person name="Hauser L."/>
            <person name="Worsham P."/>
            <person name="Chu M."/>
            <person name="Bearden S."/>
            <person name="Garcia E."/>
            <person name="Richardson P."/>
        </authorList>
    </citation>
    <scope>NUCLEOTIDE SEQUENCE [LARGE SCALE GENOMIC DNA]</scope>
    <source>
        <strain>Pestoides F</strain>
    </source>
</reference>
<comment type="function">
    <text evidence="1">O-methyltransferase that catalyzes the 2 O-methylation steps in the ubiquinone biosynthetic pathway.</text>
</comment>
<comment type="catalytic activity">
    <reaction evidence="1">
        <text>a 3-demethylubiquinol + S-adenosyl-L-methionine = a ubiquinol + S-adenosyl-L-homocysteine + H(+)</text>
        <dbReference type="Rhea" id="RHEA:44380"/>
        <dbReference type="Rhea" id="RHEA-COMP:9566"/>
        <dbReference type="Rhea" id="RHEA-COMP:10914"/>
        <dbReference type="ChEBI" id="CHEBI:15378"/>
        <dbReference type="ChEBI" id="CHEBI:17976"/>
        <dbReference type="ChEBI" id="CHEBI:57856"/>
        <dbReference type="ChEBI" id="CHEBI:59789"/>
        <dbReference type="ChEBI" id="CHEBI:84422"/>
        <dbReference type="EC" id="2.1.1.64"/>
    </reaction>
</comment>
<comment type="catalytic activity">
    <reaction evidence="1">
        <text>a 3-(all-trans-polyprenyl)benzene-1,2-diol + S-adenosyl-L-methionine = a 2-methoxy-6-(all-trans-polyprenyl)phenol + S-adenosyl-L-homocysteine + H(+)</text>
        <dbReference type="Rhea" id="RHEA:31411"/>
        <dbReference type="Rhea" id="RHEA-COMP:9550"/>
        <dbReference type="Rhea" id="RHEA-COMP:9551"/>
        <dbReference type="ChEBI" id="CHEBI:15378"/>
        <dbReference type="ChEBI" id="CHEBI:57856"/>
        <dbReference type="ChEBI" id="CHEBI:59789"/>
        <dbReference type="ChEBI" id="CHEBI:62729"/>
        <dbReference type="ChEBI" id="CHEBI:62731"/>
        <dbReference type="EC" id="2.1.1.222"/>
    </reaction>
</comment>
<comment type="pathway">
    <text evidence="1">Cofactor biosynthesis; ubiquinone biosynthesis.</text>
</comment>
<comment type="similarity">
    <text evidence="1">Belongs to the methyltransferase superfamily. UbiG/COQ3 family.</text>
</comment>
<accession>A4TNI8</accession>
<feature type="chain" id="PRO_1000013935" description="Ubiquinone biosynthesis O-methyltransferase">
    <location>
        <begin position="1"/>
        <end position="242"/>
    </location>
</feature>
<feature type="binding site" evidence="1">
    <location>
        <position position="44"/>
    </location>
    <ligand>
        <name>S-adenosyl-L-methionine</name>
        <dbReference type="ChEBI" id="CHEBI:59789"/>
    </ligand>
</feature>
<feature type="binding site" evidence="1">
    <location>
        <position position="64"/>
    </location>
    <ligand>
        <name>S-adenosyl-L-methionine</name>
        <dbReference type="ChEBI" id="CHEBI:59789"/>
    </ligand>
</feature>
<feature type="binding site" evidence="1">
    <location>
        <position position="85"/>
    </location>
    <ligand>
        <name>S-adenosyl-L-methionine</name>
        <dbReference type="ChEBI" id="CHEBI:59789"/>
    </ligand>
</feature>
<feature type="binding site" evidence="1">
    <location>
        <position position="129"/>
    </location>
    <ligand>
        <name>S-adenosyl-L-methionine</name>
        <dbReference type="ChEBI" id="CHEBI:59789"/>
    </ligand>
</feature>
<protein>
    <recommendedName>
        <fullName evidence="1">Ubiquinone biosynthesis O-methyltransferase</fullName>
    </recommendedName>
    <alternativeName>
        <fullName evidence="1">2-polyprenyl-6-hydroxyphenol methylase</fullName>
        <ecNumber evidence="1">2.1.1.222</ecNumber>
    </alternativeName>
    <alternativeName>
        <fullName evidence="1">3-demethylubiquinone 3-O-methyltransferase</fullName>
        <ecNumber evidence="1">2.1.1.64</ecNumber>
    </alternativeName>
</protein>
<dbReference type="EC" id="2.1.1.222" evidence="1"/>
<dbReference type="EC" id="2.1.1.64" evidence="1"/>
<dbReference type="EMBL" id="CP000668">
    <property type="protein sequence ID" value="ABP40850.1"/>
    <property type="molecule type" value="Genomic_DNA"/>
</dbReference>
<dbReference type="RefSeq" id="WP_002210820.1">
    <property type="nucleotide sequence ID" value="NZ_CP009715.1"/>
</dbReference>
<dbReference type="SMR" id="A4TNI8"/>
<dbReference type="GeneID" id="57977354"/>
<dbReference type="KEGG" id="ypp:YPDSF_2478"/>
<dbReference type="PATRIC" id="fig|386656.14.peg.3994"/>
<dbReference type="UniPathway" id="UPA00232"/>
<dbReference type="GO" id="GO:0102208">
    <property type="term" value="F:2-polyprenyl-6-hydroxyphenol methylase activity"/>
    <property type="evidence" value="ECO:0007669"/>
    <property type="project" value="UniProtKB-EC"/>
</dbReference>
<dbReference type="GO" id="GO:0061542">
    <property type="term" value="F:3-demethylubiquinol 3-O-methyltransferase activity"/>
    <property type="evidence" value="ECO:0007669"/>
    <property type="project" value="UniProtKB-UniRule"/>
</dbReference>
<dbReference type="GO" id="GO:0010420">
    <property type="term" value="F:polyprenyldihydroxybenzoate methyltransferase activity"/>
    <property type="evidence" value="ECO:0007669"/>
    <property type="project" value="InterPro"/>
</dbReference>
<dbReference type="GO" id="GO:0032259">
    <property type="term" value="P:methylation"/>
    <property type="evidence" value="ECO:0007669"/>
    <property type="project" value="UniProtKB-KW"/>
</dbReference>
<dbReference type="CDD" id="cd02440">
    <property type="entry name" value="AdoMet_MTases"/>
    <property type="match status" value="1"/>
</dbReference>
<dbReference type="FunFam" id="3.40.50.150:FF:000028">
    <property type="entry name" value="Ubiquinone biosynthesis O-methyltransferase"/>
    <property type="match status" value="1"/>
</dbReference>
<dbReference type="Gene3D" id="3.40.50.150">
    <property type="entry name" value="Vaccinia Virus protein VP39"/>
    <property type="match status" value="1"/>
</dbReference>
<dbReference type="HAMAP" id="MF_00472">
    <property type="entry name" value="UbiG"/>
    <property type="match status" value="1"/>
</dbReference>
<dbReference type="InterPro" id="IPR029063">
    <property type="entry name" value="SAM-dependent_MTases_sf"/>
</dbReference>
<dbReference type="InterPro" id="IPR010233">
    <property type="entry name" value="UbiG_MeTrfase"/>
</dbReference>
<dbReference type="NCBIfam" id="TIGR01983">
    <property type="entry name" value="UbiG"/>
    <property type="match status" value="1"/>
</dbReference>
<dbReference type="PANTHER" id="PTHR43464">
    <property type="entry name" value="METHYLTRANSFERASE"/>
    <property type="match status" value="1"/>
</dbReference>
<dbReference type="PANTHER" id="PTHR43464:SF19">
    <property type="entry name" value="UBIQUINONE BIOSYNTHESIS O-METHYLTRANSFERASE, MITOCHONDRIAL"/>
    <property type="match status" value="1"/>
</dbReference>
<dbReference type="Pfam" id="PF13489">
    <property type="entry name" value="Methyltransf_23"/>
    <property type="match status" value="1"/>
</dbReference>
<dbReference type="SUPFAM" id="SSF53335">
    <property type="entry name" value="S-adenosyl-L-methionine-dependent methyltransferases"/>
    <property type="match status" value="1"/>
</dbReference>
<organism>
    <name type="scientific">Yersinia pestis (strain Pestoides F)</name>
    <dbReference type="NCBI Taxonomy" id="386656"/>
    <lineage>
        <taxon>Bacteria</taxon>
        <taxon>Pseudomonadati</taxon>
        <taxon>Pseudomonadota</taxon>
        <taxon>Gammaproteobacteria</taxon>
        <taxon>Enterobacterales</taxon>
        <taxon>Yersiniaceae</taxon>
        <taxon>Yersinia</taxon>
    </lineage>
</organism>
<proteinExistence type="inferred from homology"/>
<keyword id="KW-0489">Methyltransferase</keyword>
<keyword id="KW-0949">S-adenosyl-L-methionine</keyword>
<keyword id="KW-0808">Transferase</keyword>
<keyword id="KW-0831">Ubiquinone biosynthesis</keyword>
<evidence type="ECO:0000255" key="1">
    <source>
        <dbReference type="HAMAP-Rule" id="MF_00472"/>
    </source>
</evidence>